<sequence>MNVRVRFAPSPTGFVHIGSLRTALYNYLFAKKMGGEYILRVEDTDQSRLVEGAIENMLNAMKWAGVNHSEGVILDDSGKVVQKGEYGPYIQSQRLDIYQEYIKQLLDSGKAYYCFCTKERLDEVRDAQRAAGETAKYDGHCKNLSKEEVEANIKAGIPYVIRLRLPENHTIKFTDLVRGDMEFNTNDLDDQVLMKTDGFPTYHFAVVVDDYLMKITHVIRGEEWVSSTPKHVYLYEAFGWEAPVFVHLPNILNKEKKKLSKRQGDVAVEDFKKKGYLPEGLVNYVALVGWSPEDNQELFTMEELEKAFSVERVSKSGGVFDTEKLNWVNQHYIKDGDDAYLTDLAIPFLIEDGFITEEEATNKYDFLKSMISVLKEKLQYVKEVTEHASIFFGDKIEVETEEGREFLRLEHIPTLIDALREKIEKTEVLNAEFVQAMLKEIQKEYKIKGKNLFMGSRIILTGQMHGPDLPKVMEVLGKETCLNRIAYVKNNIL</sequence>
<organism>
    <name type="scientific">Clostridioides difficile (strain 630)</name>
    <name type="common">Peptoclostridium difficile</name>
    <dbReference type="NCBI Taxonomy" id="272563"/>
    <lineage>
        <taxon>Bacteria</taxon>
        <taxon>Bacillati</taxon>
        <taxon>Bacillota</taxon>
        <taxon>Clostridia</taxon>
        <taxon>Peptostreptococcales</taxon>
        <taxon>Peptostreptococcaceae</taxon>
        <taxon>Clostridioides</taxon>
    </lineage>
</organism>
<accession>Q18CD6</accession>
<keyword id="KW-0030">Aminoacyl-tRNA synthetase</keyword>
<keyword id="KW-0067">ATP-binding</keyword>
<keyword id="KW-0963">Cytoplasm</keyword>
<keyword id="KW-0436">Ligase</keyword>
<keyword id="KW-0547">Nucleotide-binding</keyword>
<keyword id="KW-0648">Protein biosynthesis</keyword>
<keyword id="KW-1185">Reference proteome</keyword>
<protein>
    <recommendedName>
        <fullName evidence="1">Glutamate--tRNA ligase</fullName>
        <ecNumber evidence="1">6.1.1.17</ecNumber>
    </recommendedName>
    <alternativeName>
        <fullName evidence="1">Glutamyl-tRNA synthetase</fullName>
        <shortName evidence="1">GluRS</shortName>
    </alternativeName>
</protein>
<name>SYE_CLOD6</name>
<reference key="1">
    <citation type="journal article" date="2006" name="Nat. Genet.">
        <title>The multidrug-resistant human pathogen Clostridium difficile has a highly mobile, mosaic genome.</title>
        <authorList>
            <person name="Sebaihia M."/>
            <person name="Wren B.W."/>
            <person name="Mullany P."/>
            <person name="Fairweather N.F."/>
            <person name="Minton N."/>
            <person name="Stabler R."/>
            <person name="Thomson N.R."/>
            <person name="Roberts A.P."/>
            <person name="Cerdeno-Tarraga A.M."/>
            <person name="Wang H."/>
            <person name="Holden M.T.G."/>
            <person name="Wright A."/>
            <person name="Churcher C."/>
            <person name="Quail M.A."/>
            <person name="Baker S."/>
            <person name="Bason N."/>
            <person name="Brooks K."/>
            <person name="Chillingworth T."/>
            <person name="Cronin A."/>
            <person name="Davis P."/>
            <person name="Dowd L."/>
            <person name="Fraser A."/>
            <person name="Feltwell T."/>
            <person name="Hance Z."/>
            <person name="Holroyd S."/>
            <person name="Jagels K."/>
            <person name="Moule S."/>
            <person name="Mungall K."/>
            <person name="Price C."/>
            <person name="Rabbinowitsch E."/>
            <person name="Sharp S."/>
            <person name="Simmonds M."/>
            <person name="Stevens K."/>
            <person name="Unwin L."/>
            <person name="Whithead S."/>
            <person name="Dupuy B."/>
            <person name="Dougan G."/>
            <person name="Barrell B."/>
            <person name="Parkhill J."/>
        </authorList>
    </citation>
    <scope>NUCLEOTIDE SEQUENCE [LARGE SCALE GENOMIC DNA]</scope>
    <source>
        <strain>630</strain>
    </source>
</reference>
<comment type="function">
    <text evidence="1">Catalyzes the attachment of glutamate to tRNA(Glu) in a two-step reaction: glutamate is first activated by ATP to form Glu-AMP and then transferred to the acceptor end of tRNA(Glu).</text>
</comment>
<comment type="catalytic activity">
    <reaction evidence="1">
        <text>tRNA(Glu) + L-glutamate + ATP = L-glutamyl-tRNA(Glu) + AMP + diphosphate</text>
        <dbReference type="Rhea" id="RHEA:23540"/>
        <dbReference type="Rhea" id="RHEA-COMP:9663"/>
        <dbReference type="Rhea" id="RHEA-COMP:9680"/>
        <dbReference type="ChEBI" id="CHEBI:29985"/>
        <dbReference type="ChEBI" id="CHEBI:30616"/>
        <dbReference type="ChEBI" id="CHEBI:33019"/>
        <dbReference type="ChEBI" id="CHEBI:78442"/>
        <dbReference type="ChEBI" id="CHEBI:78520"/>
        <dbReference type="ChEBI" id="CHEBI:456215"/>
        <dbReference type="EC" id="6.1.1.17"/>
    </reaction>
</comment>
<comment type="subunit">
    <text evidence="1">Monomer.</text>
</comment>
<comment type="subcellular location">
    <subcellularLocation>
        <location evidence="1">Cytoplasm</location>
    </subcellularLocation>
</comment>
<comment type="similarity">
    <text evidence="1">Belongs to the class-I aminoacyl-tRNA synthetase family. Glutamate--tRNA ligase type 1 subfamily.</text>
</comment>
<dbReference type="EC" id="6.1.1.17" evidence="1"/>
<dbReference type="EMBL" id="AM180355">
    <property type="protein sequence ID" value="CAJ66865.1"/>
    <property type="molecule type" value="Genomic_DNA"/>
</dbReference>
<dbReference type="RefSeq" id="WP_003435581.1">
    <property type="nucleotide sequence ID" value="NZ_JAUPES010000031.1"/>
</dbReference>
<dbReference type="RefSeq" id="YP_001086514.1">
    <property type="nucleotide sequence ID" value="NC_009089.1"/>
</dbReference>
<dbReference type="SMR" id="Q18CD6"/>
<dbReference type="STRING" id="272563.CD630_00510"/>
<dbReference type="EnsemblBacteria" id="CAJ66865">
    <property type="protein sequence ID" value="CAJ66865"/>
    <property type="gene ID" value="CD630_00510"/>
</dbReference>
<dbReference type="GeneID" id="66352547"/>
<dbReference type="KEGG" id="cdf:CD630_00510"/>
<dbReference type="KEGG" id="pdc:CDIF630_00114"/>
<dbReference type="PATRIC" id="fig|272563.120.peg.55"/>
<dbReference type="eggNOG" id="COG0008">
    <property type="taxonomic scope" value="Bacteria"/>
</dbReference>
<dbReference type="OrthoDB" id="9807503at2"/>
<dbReference type="PhylomeDB" id="Q18CD6"/>
<dbReference type="BioCyc" id="PDIF272563:G12WB-103-MONOMER"/>
<dbReference type="Proteomes" id="UP000001978">
    <property type="component" value="Chromosome"/>
</dbReference>
<dbReference type="GO" id="GO:0005737">
    <property type="term" value="C:cytoplasm"/>
    <property type="evidence" value="ECO:0007669"/>
    <property type="project" value="UniProtKB-SubCell"/>
</dbReference>
<dbReference type="GO" id="GO:0005524">
    <property type="term" value="F:ATP binding"/>
    <property type="evidence" value="ECO:0007669"/>
    <property type="project" value="UniProtKB-UniRule"/>
</dbReference>
<dbReference type="GO" id="GO:0004818">
    <property type="term" value="F:glutamate-tRNA ligase activity"/>
    <property type="evidence" value="ECO:0007669"/>
    <property type="project" value="UniProtKB-UniRule"/>
</dbReference>
<dbReference type="GO" id="GO:0000049">
    <property type="term" value="F:tRNA binding"/>
    <property type="evidence" value="ECO:0007669"/>
    <property type="project" value="InterPro"/>
</dbReference>
<dbReference type="GO" id="GO:0008270">
    <property type="term" value="F:zinc ion binding"/>
    <property type="evidence" value="ECO:0007669"/>
    <property type="project" value="InterPro"/>
</dbReference>
<dbReference type="GO" id="GO:0006424">
    <property type="term" value="P:glutamyl-tRNA aminoacylation"/>
    <property type="evidence" value="ECO:0007669"/>
    <property type="project" value="UniProtKB-UniRule"/>
</dbReference>
<dbReference type="CDD" id="cd00808">
    <property type="entry name" value="GluRS_core"/>
    <property type="match status" value="1"/>
</dbReference>
<dbReference type="FunFam" id="1.10.10.350:FF:000002">
    <property type="entry name" value="Glutamate--tRNA ligase"/>
    <property type="match status" value="1"/>
</dbReference>
<dbReference type="FunFam" id="3.40.50.620:FF:000045">
    <property type="entry name" value="Glutamate--tRNA ligase, mitochondrial"/>
    <property type="match status" value="1"/>
</dbReference>
<dbReference type="Gene3D" id="1.10.10.350">
    <property type="match status" value="1"/>
</dbReference>
<dbReference type="Gene3D" id="3.40.50.620">
    <property type="entry name" value="HUPs"/>
    <property type="match status" value="1"/>
</dbReference>
<dbReference type="HAMAP" id="MF_00022">
    <property type="entry name" value="Glu_tRNA_synth_type1"/>
    <property type="match status" value="1"/>
</dbReference>
<dbReference type="InterPro" id="IPR045462">
    <property type="entry name" value="aa-tRNA-synth_I_cd-bd"/>
</dbReference>
<dbReference type="InterPro" id="IPR020751">
    <property type="entry name" value="aa-tRNA-synth_I_codon-bd_sub2"/>
</dbReference>
<dbReference type="InterPro" id="IPR008925">
    <property type="entry name" value="aa_tRNA-synth_I_cd-bd_sf"/>
</dbReference>
<dbReference type="InterPro" id="IPR004527">
    <property type="entry name" value="Glu-tRNA-ligase_bac/mito"/>
</dbReference>
<dbReference type="InterPro" id="IPR000924">
    <property type="entry name" value="Glu/Gln-tRNA-synth"/>
</dbReference>
<dbReference type="InterPro" id="IPR020058">
    <property type="entry name" value="Glu/Gln-tRNA-synth_Ib_cat-dom"/>
</dbReference>
<dbReference type="InterPro" id="IPR049940">
    <property type="entry name" value="GluQ/Sye"/>
</dbReference>
<dbReference type="InterPro" id="IPR033910">
    <property type="entry name" value="GluRS_core"/>
</dbReference>
<dbReference type="InterPro" id="IPR014729">
    <property type="entry name" value="Rossmann-like_a/b/a_fold"/>
</dbReference>
<dbReference type="NCBIfam" id="TIGR00464">
    <property type="entry name" value="gltX_bact"/>
    <property type="match status" value="1"/>
</dbReference>
<dbReference type="PANTHER" id="PTHR43311">
    <property type="entry name" value="GLUTAMATE--TRNA LIGASE"/>
    <property type="match status" value="1"/>
</dbReference>
<dbReference type="PANTHER" id="PTHR43311:SF2">
    <property type="entry name" value="GLUTAMATE--TRNA LIGASE, MITOCHONDRIAL-RELATED"/>
    <property type="match status" value="1"/>
</dbReference>
<dbReference type="Pfam" id="PF19269">
    <property type="entry name" value="Anticodon_2"/>
    <property type="match status" value="1"/>
</dbReference>
<dbReference type="Pfam" id="PF00749">
    <property type="entry name" value="tRNA-synt_1c"/>
    <property type="match status" value="1"/>
</dbReference>
<dbReference type="PRINTS" id="PR00987">
    <property type="entry name" value="TRNASYNTHGLU"/>
</dbReference>
<dbReference type="SUPFAM" id="SSF48163">
    <property type="entry name" value="An anticodon-binding domain of class I aminoacyl-tRNA synthetases"/>
    <property type="match status" value="1"/>
</dbReference>
<dbReference type="SUPFAM" id="SSF52374">
    <property type="entry name" value="Nucleotidylyl transferase"/>
    <property type="match status" value="1"/>
</dbReference>
<proteinExistence type="inferred from homology"/>
<feature type="chain" id="PRO_1000001890" description="Glutamate--tRNA ligase">
    <location>
        <begin position="1"/>
        <end position="493"/>
    </location>
</feature>
<feature type="short sequence motif" description="'HIGH' region" evidence="1">
    <location>
        <begin position="9"/>
        <end position="19"/>
    </location>
</feature>
<feature type="short sequence motif" description="'KMSKS' region" evidence="1">
    <location>
        <begin position="258"/>
        <end position="262"/>
    </location>
</feature>
<feature type="binding site" evidence="1">
    <location>
        <position position="261"/>
    </location>
    <ligand>
        <name>ATP</name>
        <dbReference type="ChEBI" id="CHEBI:30616"/>
    </ligand>
</feature>
<gene>
    <name evidence="1" type="primary">gltX</name>
    <name type="ordered locus">CD630_00510</name>
</gene>
<evidence type="ECO:0000255" key="1">
    <source>
        <dbReference type="HAMAP-Rule" id="MF_00022"/>
    </source>
</evidence>